<organism>
    <name type="scientific">Escherichia coli O9:H4 (strain HS)</name>
    <dbReference type="NCBI Taxonomy" id="331112"/>
    <lineage>
        <taxon>Bacteria</taxon>
        <taxon>Pseudomonadati</taxon>
        <taxon>Pseudomonadota</taxon>
        <taxon>Gammaproteobacteria</taxon>
        <taxon>Enterobacterales</taxon>
        <taxon>Enterobacteriaceae</taxon>
        <taxon>Escherichia</taxon>
    </lineage>
</organism>
<protein>
    <recommendedName>
        <fullName evidence="1">tRNA-modifying protein YgfZ</fullName>
    </recommendedName>
</protein>
<accession>A8A439</accession>
<reference key="1">
    <citation type="journal article" date="2008" name="J. Bacteriol.">
        <title>The pangenome structure of Escherichia coli: comparative genomic analysis of E. coli commensal and pathogenic isolates.</title>
        <authorList>
            <person name="Rasko D.A."/>
            <person name="Rosovitz M.J."/>
            <person name="Myers G.S.A."/>
            <person name="Mongodin E.F."/>
            <person name="Fricke W.F."/>
            <person name="Gajer P."/>
            <person name="Crabtree J."/>
            <person name="Sebaihia M."/>
            <person name="Thomson N.R."/>
            <person name="Chaudhuri R."/>
            <person name="Henderson I.R."/>
            <person name="Sperandio V."/>
            <person name="Ravel J."/>
        </authorList>
    </citation>
    <scope>NUCLEOTIDE SEQUENCE [LARGE SCALE GENOMIC DNA]</scope>
    <source>
        <strain>HS</strain>
    </source>
</reference>
<gene>
    <name evidence="1" type="primary">ygfZ</name>
    <name type="ordered locus">EcHS_A3057</name>
</gene>
<comment type="function">
    <text evidence="1">Folate-binding protein involved in regulating the level of ATP-DnaA and in the modification of some tRNAs. It is probably a key factor in regulatory networks that act via tRNA modification, such as initiation of chromosomal replication.</text>
</comment>
<comment type="subcellular location">
    <subcellularLocation>
        <location evidence="1">Cytoplasm</location>
    </subcellularLocation>
</comment>
<comment type="similarity">
    <text evidence="1">Belongs to the tRNA-modifying YgfZ family.</text>
</comment>
<evidence type="ECO:0000255" key="1">
    <source>
        <dbReference type="HAMAP-Rule" id="MF_01175"/>
    </source>
</evidence>
<feature type="chain" id="PRO_1000065773" description="tRNA-modifying protein YgfZ">
    <location>
        <begin position="1"/>
        <end position="326"/>
    </location>
</feature>
<feature type="binding site" evidence="1">
    <location>
        <position position="27"/>
    </location>
    <ligand>
        <name>folate</name>
        <dbReference type="ChEBI" id="CHEBI:62501"/>
    </ligand>
</feature>
<feature type="binding site" evidence="1">
    <location>
        <position position="189"/>
    </location>
    <ligand>
        <name>folate</name>
        <dbReference type="ChEBI" id="CHEBI:62501"/>
    </ligand>
</feature>
<keyword id="KW-0963">Cytoplasm</keyword>
<keyword id="KW-0290">Folate-binding</keyword>
<keyword id="KW-0819">tRNA processing</keyword>
<proteinExistence type="inferred from homology"/>
<dbReference type="EMBL" id="CP000802">
    <property type="protein sequence ID" value="ABV07293.1"/>
    <property type="molecule type" value="Genomic_DNA"/>
</dbReference>
<dbReference type="RefSeq" id="WP_000886062.1">
    <property type="nucleotide sequence ID" value="NC_009800.1"/>
</dbReference>
<dbReference type="SMR" id="A8A439"/>
<dbReference type="GeneID" id="75205265"/>
<dbReference type="KEGG" id="ecx:EcHS_A3057"/>
<dbReference type="HOGENOM" id="CLU_007884_6_1_6"/>
<dbReference type="GO" id="GO:0005737">
    <property type="term" value="C:cytoplasm"/>
    <property type="evidence" value="ECO:0007669"/>
    <property type="project" value="UniProtKB-SubCell"/>
</dbReference>
<dbReference type="GO" id="GO:0005542">
    <property type="term" value="F:folic acid binding"/>
    <property type="evidence" value="ECO:0007669"/>
    <property type="project" value="UniProtKB-UniRule"/>
</dbReference>
<dbReference type="GO" id="GO:0016226">
    <property type="term" value="P:iron-sulfur cluster assembly"/>
    <property type="evidence" value="ECO:0007669"/>
    <property type="project" value="TreeGrafter"/>
</dbReference>
<dbReference type="GO" id="GO:0009451">
    <property type="term" value="P:RNA modification"/>
    <property type="evidence" value="ECO:0007669"/>
    <property type="project" value="InterPro"/>
</dbReference>
<dbReference type="GO" id="GO:0008033">
    <property type="term" value="P:tRNA processing"/>
    <property type="evidence" value="ECO:0007669"/>
    <property type="project" value="UniProtKB-UniRule"/>
</dbReference>
<dbReference type="FunFam" id="2.40.30.160:FF:000001">
    <property type="entry name" value="tRNA-modifying protein YgfZ"/>
    <property type="match status" value="1"/>
</dbReference>
<dbReference type="FunFam" id="3.30.70.1400:FF:000002">
    <property type="entry name" value="tRNA-modifying protein YgfZ"/>
    <property type="match status" value="1"/>
</dbReference>
<dbReference type="FunFam" id="3.30.70.1630:FF:000001">
    <property type="entry name" value="tRNA-modifying protein YgfZ"/>
    <property type="match status" value="1"/>
</dbReference>
<dbReference type="Gene3D" id="2.40.30.160">
    <property type="match status" value="1"/>
</dbReference>
<dbReference type="Gene3D" id="3.30.70.1630">
    <property type="match status" value="1"/>
</dbReference>
<dbReference type="Gene3D" id="3.30.70.1400">
    <property type="entry name" value="Aminomethyltransferase beta-barrel domains"/>
    <property type="match status" value="1"/>
</dbReference>
<dbReference type="HAMAP" id="MF_01175">
    <property type="entry name" value="tRNA_modifying_YgfZ"/>
    <property type="match status" value="1"/>
</dbReference>
<dbReference type="InterPro" id="IPR006222">
    <property type="entry name" value="GCV_T_N"/>
</dbReference>
<dbReference type="InterPro" id="IPR029043">
    <property type="entry name" value="GcvT/YgfZ_C"/>
</dbReference>
<dbReference type="InterPro" id="IPR023758">
    <property type="entry name" value="tRNA-modifying_YgfZ"/>
</dbReference>
<dbReference type="InterPro" id="IPR045179">
    <property type="entry name" value="YgfZ/GcvT"/>
</dbReference>
<dbReference type="InterPro" id="IPR017703">
    <property type="entry name" value="YgfZ/GcvT_CS"/>
</dbReference>
<dbReference type="InterPro" id="IPR048451">
    <property type="entry name" value="YgfZ_barrel"/>
</dbReference>
<dbReference type="NCBIfam" id="NF007110">
    <property type="entry name" value="PRK09559.1"/>
    <property type="match status" value="1"/>
</dbReference>
<dbReference type="NCBIfam" id="TIGR03317">
    <property type="entry name" value="ygfZ_signature"/>
    <property type="match status" value="1"/>
</dbReference>
<dbReference type="PANTHER" id="PTHR22602">
    <property type="entry name" value="TRANSFERASE CAF17, MITOCHONDRIAL-RELATED"/>
    <property type="match status" value="1"/>
</dbReference>
<dbReference type="PANTHER" id="PTHR22602:SF0">
    <property type="entry name" value="TRANSFERASE CAF17, MITOCHONDRIAL-RELATED"/>
    <property type="match status" value="1"/>
</dbReference>
<dbReference type="Pfam" id="PF01571">
    <property type="entry name" value="GCV_T"/>
    <property type="match status" value="1"/>
</dbReference>
<dbReference type="Pfam" id="PF21130">
    <property type="entry name" value="YgfZ_barrel"/>
    <property type="match status" value="1"/>
</dbReference>
<dbReference type="SUPFAM" id="SSF101790">
    <property type="entry name" value="Aminomethyltransferase beta-barrel domain"/>
    <property type="match status" value="1"/>
</dbReference>
<dbReference type="SUPFAM" id="SSF103025">
    <property type="entry name" value="Folate-binding domain"/>
    <property type="match status" value="1"/>
</dbReference>
<sequence>MAFTPFPPRQPTASARLPLTLMTLDDWALATITGADSEKYMQGQVTADVSQMAEDQHLLAAHCDAKGKMWSNLRLFRDGDGFAWIERRSVREPQLTELKKYAVFSKVTIAPDDERVLLGVAGFQARAALANLFSELPSKEKQVVKEGATTLLWFEHPAERFLIVTDEATANMLTDKLRGEAELNNSQQWLALNIEAGFPVIDAANSGQFIPQATNLQALGGISFKKGCYTGQEMVARAKFRGANKRALWLLAGSASRLPEAGEDLELKMGENWRRTGTVLAAVKLEDGQVVVQVVMNNDMEPDSIFRVRDDANTLHIEPLPYSLEE</sequence>
<name>YGFZ_ECOHS</name>